<keyword id="KW-1003">Cell membrane</keyword>
<keyword id="KW-0325">Glycoprotein</keyword>
<keyword id="KW-0336">GPI-anchor</keyword>
<keyword id="KW-0449">Lipoprotein</keyword>
<keyword id="KW-0472">Membrane</keyword>
<keyword id="KW-0732">Signal</keyword>
<reference key="1">
    <citation type="journal article" date="1992" name="Mol. Biochem. Parasitol.">
        <title>A procyclin-associated gene in Trypanosoma brucei encodes a polypeptide related to ESAG 6 and 7 proteins.</title>
        <authorList>
            <person name="Koenig-Martin E."/>
            <person name="Yamage M."/>
            <person name="Roditi I."/>
        </authorList>
    </citation>
    <scope>NUCLEOTIDE SEQUENCE [MRNA]</scope>
    <source>
        <strain>427</strain>
    </source>
</reference>
<dbReference type="EMBL" id="X62148">
    <property type="protein sequence ID" value="CAA44074.1"/>
    <property type="molecule type" value="mRNA"/>
</dbReference>
<dbReference type="PIR" id="A48447">
    <property type="entry name" value="A48447"/>
</dbReference>
<dbReference type="SMR" id="Q01889"/>
<dbReference type="GlyCosmos" id="Q01889">
    <property type="glycosylation" value="4 sites, No reported glycans"/>
</dbReference>
<dbReference type="GO" id="GO:0005886">
    <property type="term" value="C:plasma membrane"/>
    <property type="evidence" value="ECO:0007669"/>
    <property type="project" value="UniProtKB-SubCell"/>
</dbReference>
<dbReference type="GO" id="GO:0098552">
    <property type="term" value="C:side of membrane"/>
    <property type="evidence" value="ECO:0007669"/>
    <property type="project" value="UniProtKB-KW"/>
</dbReference>
<dbReference type="GO" id="GO:0042783">
    <property type="term" value="P:symbiont-mediated evasion of host immune response"/>
    <property type="evidence" value="ECO:0007669"/>
    <property type="project" value="InterPro"/>
</dbReference>
<dbReference type="Gene3D" id="3.90.150.10">
    <property type="entry name" value="Variant Surface Glycoprotein, subunit A domain 1"/>
    <property type="match status" value="1"/>
</dbReference>
<dbReference type="InterPro" id="IPR001812">
    <property type="entry name" value="Trypano_VSG_A_N_dom"/>
</dbReference>
<dbReference type="Pfam" id="PF00913">
    <property type="entry name" value="Trypan_glycop"/>
    <property type="match status" value="1"/>
</dbReference>
<dbReference type="SUPFAM" id="SSF58087">
    <property type="entry name" value="Variant surface glycoprotein (N-terminal domain)"/>
    <property type="match status" value="1"/>
</dbReference>
<name>PAG1_TRYBB</name>
<protein>
    <recommendedName>
        <fullName>Protein PAG1</fullName>
    </recommendedName>
</protein>
<organism>
    <name type="scientific">Trypanosoma brucei brucei</name>
    <dbReference type="NCBI Taxonomy" id="5702"/>
    <lineage>
        <taxon>Eukaryota</taxon>
        <taxon>Discoba</taxon>
        <taxon>Euglenozoa</taxon>
        <taxon>Kinetoplastea</taxon>
        <taxon>Metakinetoplastina</taxon>
        <taxon>Trypanosomatida</taxon>
        <taxon>Trypanosomatidae</taxon>
        <taxon>Trypanosoma</taxon>
    </lineage>
</organism>
<comment type="subcellular location">
    <subcellularLocation>
        <location>Cell membrane</location>
        <topology>Lipid-anchor</topology>
        <topology>GPI-anchor</topology>
    </subcellularLocation>
</comment>
<evidence type="ECO:0000255" key="1"/>
<feature type="signal peptide" evidence="1">
    <location>
        <begin position="1"/>
        <end position="50"/>
    </location>
</feature>
<feature type="chain" id="PRO_0000021993" description="Protein PAG1">
    <location>
        <begin position="51"/>
        <end position="391"/>
    </location>
</feature>
<feature type="propeptide" id="PRO_0000021994" description="Removed in mature form" evidence="1">
    <location>
        <begin position="392"/>
        <end position="405"/>
    </location>
</feature>
<feature type="lipid moiety-binding region" description="GPI-anchor amidated alanine" evidence="1">
    <location>
        <position position="391"/>
    </location>
</feature>
<feature type="glycosylation site" description="N-linked (GlcNAc...) asparagine" evidence="1">
    <location>
        <position position="55"/>
    </location>
</feature>
<feature type="glycosylation site" description="N-linked (GlcNAc...) asparagine" evidence="1">
    <location>
        <position position="104"/>
    </location>
</feature>
<feature type="glycosylation site" description="N-linked (GlcNAc...) asparagine" evidence="1">
    <location>
        <position position="256"/>
    </location>
</feature>
<feature type="glycosylation site" description="N-linked (GlcNAc...) asparagine" evidence="1">
    <location>
        <position position="351"/>
    </location>
</feature>
<accession>Q01889</accession>
<gene>
    <name type="primary">PAG1</name>
</gene>
<sequence>MVSLIILFRLTFAIANRVRTLMKVLVIVSFFVLTGSASADSGALSLSGAAEALCNASKRLKSVYAFVQAKTKYATEKVREFEDMVELVRLKIVRVRGNEGGNGNWTSCTGIAKFLKRVGSKVNRVKRRELKRLRYLGYSAVGAAGIAAGRLDEMINVWRRAYSSGKGDFCVGNSEHHATRNQLLNCYLSDSEKDEFISLGDMHRMERVEEMNMTRESMNELLRLTGGGGNPLERYVHSANCHLTNTRPGGGYLSENSTSRRILWGDGIISLKRSGRGFVGGTGKTRAEVLIHDVTWEEDPVNNVPVLRNAYRELRKFVNLYAYIEELAHETGAHWNWEYAQAIVNTGTHGNKSTVVVDEDSGKSFVVLGNRETVQEEKLLEEMAICGVGRADSLRRTLALLFLLF</sequence>
<proteinExistence type="evidence at transcript level"/>